<evidence type="ECO:0000250" key="1"/>
<evidence type="ECO:0000255" key="2"/>
<evidence type="ECO:0000305" key="3"/>
<accession>Q4P983</accession>
<accession>A0A0D1DX15</accession>
<protein>
    <recommendedName>
        <fullName>Presequence translocated-associated motor subunit PAM17, mitochondrial</fullName>
    </recommendedName>
</protein>
<comment type="function">
    <text evidence="1">Component of the PAM complex, a complex required for the translocation of transit peptide-containing proteins from the inner membrane into the mitochondrial matrix in an ATP-dependent manner.</text>
</comment>
<comment type="subunit">
    <text evidence="1">Component of the PAM complex, at least composed of mtHsp70 (SSC1), MGE1, TIM44, PAM16, PAM17 and PAM18.</text>
</comment>
<comment type="subcellular location">
    <subcellularLocation>
        <location evidence="1">Mitochondrion inner membrane</location>
        <topology evidence="1">Multi-pass membrane protein</topology>
    </subcellularLocation>
</comment>
<comment type="similarity">
    <text evidence="3">Belongs to the PAM17 family.</text>
</comment>
<name>PAM17_MYCMD</name>
<dbReference type="EMBL" id="CM003147">
    <property type="protein sequence ID" value="KIS68764.1"/>
    <property type="molecule type" value="Genomic_DNA"/>
</dbReference>
<dbReference type="RefSeq" id="XP_011389726.1">
    <property type="nucleotide sequence ID" value="XM_011391424.1"/>
</dbReference>
<dbReference type="FunCoup" id="Q4P983">
    <property type="interactions" value="27"/>
</dbReference>
<dbReference type="STRING" id="237631.Q4P983"/>
<dbReference type="EnsemblFungi" id="KIS68764">
    <property type="protein sequence ID" value="KIS68764"/>
    <property type="gene ID" value="UMAG_03330"/>
</dbReference>
<dbReference type="GeneID" id="23563814"/>
<dbReference type="KEGG" id="uma:UMAG_03330"/>
<dbReference type="VEuPathDB" id="FungiDB:UMAG_03330"/>
<dbReference type="eggNOG" id="ENOG502S1B1">
    <property type="taxonomic scope" value="Eukaryota"/>
</dbReference>
<dbReference type="HOGENOM" id="CLU_068297_1_0_1"/>
<dbReference type="InParanoid" id="Q4P983"/>
<dbReference type="OMA" id="MIFGFDP"/>
<dbReference type="OrthoDB" id="5970083at2759"/>
<dbReference type="Proteomes" id="UP000000561">
    <property type="component" value="Chromosome 8"/>
</dbReference>
<dbReference type="GO" id="GO:0001405">
    <property type="term" value="C:PAM complex, Tim23 associated import motor"/>
    <property type="evidence" value="ECO:0000318"/>
    <property type="project" value="GO_Central"/>
</dbReference>
<dbReference type="GO" id="GO:0030150">
    <property type="term" value="P:protein import into mitochondrial matrix"/>
    <property type="evidence" value="ECO:0000318"/>
    <property type="project" value="GO_Central"/>
</dbReference>
<dbReference type="InterPro" id="IPR013875">
    <property type="entry name" value="Pam17"/>
</dbReference>
<dbReference type="PANTHER" id="PTHR28021">
    <property type="entry name" value="PRESEQUENCE TRANSLOCATED-ASSOCIATED MOTOR SUBUNIT PAM17, MITOCHONDRIAL"/>
    <property type="match status" value="1"/>
</dbReference>
<dbReference type="PANTHER" id="PTHR28021:SF1">
    <property type="entry name" value="PRESEQUENCE TRANSLOCATED-ASSOCIATED MOTOR SUBUNIT PAM17, MITOCHONDRIAL"/>
    <property type="match status" value="1"/>
</dbReference>
<dbReference type="Pfam" id="PF08566">
    <property type="entry name" value="Pam17"/>
    <property type="match status" value="1"/>
</dbReference>
<keyword id="KW-0472">Membrane</keyword>
<keyword id="KW-0496">Mitochondrion</keyword>
<keyword id="KW-0999">Mitochondrion inner membrane</keyword>
<keyword id="KW-0653">Protein transport</keyword>
<keyword id="KW-1185">Reference proteome</keyword>
<keyword id="KW-0809">Transit peptide</keyword>
<keyword id="KW-0811">Translocation</keyword>
<keyword id="KW-0812">Transmembrane</keyword>
<keyword id="KW-1133">Transmembrane helix</keyword>
<keyword id="KW-0813">Transport</keyword>
<proteinExistence type="inferred from homology"/>
<reference key="1">
    <citation type="journal article" date="2006" name="Nature">
        <title>Insights from the genome of the biotrophic fungal plant pathogen Ustilago maydis.</title>
        <authorList>
            <person name="Kaemper J."/>
            <person name="Kahmann R."/>
            <person name="Boelker M."/>
            <person name="Ma L.-J."/>
            <person name="Brefort T."/>
            <person name="Saville B.J."/>
            <person name="Banuett F."/>
            <person name="Kronstad J.W."/>
            <person name="Gold S.E."/>
            <person name="Mueller O."/>
            <person name="Perlin M.H."/>
            <person name="Woesten H.A.B."/>
            <person name="de Vries R."/>
            <person name="Ruiz-Herrera J."/>
            <person name="Reynaga-Pena C.G."/>
            <person name="Snetselaar K."/>
            <person name="McCann M."/>
            <person name="Perez-Martin J."/>
            <person name="Feldbruegge M."/>
            <person name="Basse C.W."/>
            <person name="Steinberg G."/>
            <person name="Ibeas J.I."/>
            <person name="Holloman W."/>
            <person name="Guzman P."/>
            <person name="Farman M.L."/>
            <person name="Stajich J.E."/>
            <person name="Sentandreu R."/>
            <person name="Gonzalez-Prieto J.M."/>
            <person name="Kennell J.C."/>
            <person name="Molina L."/>
            <person name="Schirawski J."/>
            <person name="Mendoza-Mendoza A."/>
            <person name="Greilinger D."/>
            <person name="Muench K."/>
            <person name="Roessel N."/>
            <person name="Scherer M."/>
            <person name="Vranes M."/>
            <person name="Ladendorf O."/>
            <person name="Vincon V."/>
            <person name="Fuchs U."/>
            <person name="Sandrock B."/>
            <person name="Meng S."/>
            <person name="Ho E.C.H."/>
            <person name="Cahill M.J."/>
            <person name="Boyce K.J."/>
            <person name="Klose J."/>
            <person name="Klosterman S.J."/>
            <person name="Deelstra H.J."/>
            <person name="Ortiz-Castellanos L."/>
            <person name="Li W."/>
            <person name="Sanchez-Alonso P."/>
            <person name="Schreier P.H."/>
            <person name="Haeuser-Hahn I."/>
            <person name="Vaupel M."/>
            <person name="Koopmann E."/>
            <person name="Friedrich G."/>
            <person name="Voss H."/>
            <person name="Schlueter T."/>
            <person name="Margolis J."/>
            <person name="Platt D."/>
            <person name="Swimmer C."/>
            <person name="Gnirke A."/>
            <person name="Chen F."/>
            <person name="Vysotskaia V."/>
            <person name="Mannhaupt G."/>
            <person name="Gueldener U."/>
            <person name="Muensterkoetter M."/>
            <person name="Haase D."/>
            <person name="Oesterheld M."/>
            <person name="Mewes H.-W."/>
            <person name="Mauceli E.W."/>
            <person name="DeCaprio D."/>
            <person name="Wade C.M."/>
            <person name="Butler J."/>
            <person name="Young S.K."/>
            <person name="Jaffe D.B."/>
            <person name="Calvo S.E."/>
            <person name="Nusbaum C."/>
            <person name="Galagan J.E."/>
            <person name="Birren B.W."/>
        </authorList>
    </citation>
    <scope>NUCLEOTIDE SEQUENCE [LARGE SCALE GENOMIC DNA]</scope>
    <source>
        <strain>DSM 14603 / FGSC 9021 / UM521</strain>
    </source>
</reference>
<reference key="2">
    <citation type="submission" date="2014-09" db="EMBL/GenBank/DDBJ databases">
        <authorList>
            <person name="Gueldener U."/>
            <person name="Muensterkoetter M."/>
            <person name="Walter M.C."/>
            <person name="Mannhaupt G."/>
            <person name="Kahmann R."/>
        </authorList>
    </citation>
    <scope>GENOME REANNOTATION</scope>
    <source>
        <strain>DSM 14603 / FGSC 9021 / UM521</strain>
    </source>
</reference>
<feature type="transit peptide" description="Mitochondrion" evidence="2">
    <location>
        <begin position="1"/>
        <end position="40"/>
    </location>
</feature>
<feature type="chain" id="PRO_0000043160" description="Presequence translocated-associated motor subunit PAM17, mitochondrial">
    <location>
        <begin position="41"/>
        <end position="232"/>
    </location>
</feature>
<feature type="transmembrane region" description="Helical" evidence="2">
    <location>
        <begin position="96"/>
        <end position="116"/>
    </location>
</feature>
<feature type="transmembrane region" description="Helical" evidence="2">
    <location>
        <begin position="140"/>
        <end position="160"/>
    </location>
</feature>
<gene>
    <name type="primary">PAM17</name>
    <name type="ORF">UMAG_03330</name>
</gene>
<organism>
    <name type="scientific">Mycosarcoma maydis</name>
    <name type="common">Corn smut fungus</name>
    <name type="synonym">Ustilago maydis</name>
    <dbReference type="NCBI Taxonomy" id="5270"/>
    <lineage>
        <taxon>Eukaryota</taxon>
        <taxon>Fungi</taxon>
        <taxon>Dikarya</taxon>
        <taxon>Basidiomycota</taxon>
        <taxon>Ustilaginomycotina</taxon>
        <taxon>Ustilaginomycetes</taxon>
        <taxon>Ustilaginales</taxon>
        <taxon>Ustilaginaceae</taxon>
        <taxon>Mycosarcoma</taxon>
    </lineage>
</organism>
<sequence length="232" mass="24904">MPVAIAAARYAALSAGASSSRSAIMLSSSHRALSTSSKVASSSSSSNRGTFSPTSPILFSASSSSSSSSSPSSSRELSHLSWDKYLQLRRSRRLAGMVTTIPTTLLAGAAAGSYFLTLELDPTNAIAGLDPVYINAGLTLACTGLGWLIGPTVGNSIWGLLHRSDAKQIAQKDHDFYEHIKRNRVDPTRQSVQNPVPDYYGEKIGSIKQYRQWLRDQAAFRRKAAHGLEQDA</sequence>